<comment type="similarity">
    <text evidence="1">Belongs to the iron-sulfur cluster assembly SufBD family.</text>
</comment>
<proteinExistence type="inferred from homology"/>
<feature type="chain" id="PRO_0000298951" description="Iron-sulfur cluster assembly SufBD family protein SACOL0918">
    <location>
        <begin position="1"/>
        <end position="465"/>
    </location>
</feature>
<dbReference type="EMBL" id="CP000046">
    <property type="protein sequence ID" value="AAW37888.1"/>
    <property type="molecule type" value="Genomic_DNA"/>
</dbReference>
<dbReference type="SMR" id="Q5HHG8"/>
<dbReference type="KEGG" id="sac:SACOL0918"/>
<dbReference type="HOGENOM" id="CLU_026231_0_1_9"/>
<dbReference type="Proteomes" id="UP000000530">
    <property type="component" value="Chromosome"/>
</dbReference>
<dbReference type="GO" id="GO:0016226">
    <property type="term" value="P:iron-sulfur cluster assembly"/>
    <property type="evidence" value="ECO:0007669"/>
    <property type="project" value="InterPro"/>
</dbReference>
<dbReference type="InterPro" id="IPR055346">
    <property type="entry name" value="Fe-S_cluster_assembly_SufBD"/>
</dbReference>
<dbReference type="InterPro" id="IPR010231">
    <property type="entry name" value="SUF_FeS_clus_asmbl_SufB"/>
</dbReference>
<dbReference type="InterPro" id="IPR000825">
    <property type="entry name" value="SUF_FeS_clus_asmbl_SufBD_core"/>
</dbReference>
<dbReference type="InterPro" id="IPR037284">
    <property type="entry name" value="SUF_FeS_clus_asmbl_SufBD_sf"/>
</dbReference>
<dbReference type="InterPro" id="IPR045595">
    <property type="entry name" value="SufBD_N"/>
</dbReference>
<dbReference type="NCBIfam" id="TIGR01980">
    <property type="entry name" value="sufB"/>
    <property type="match status" value="1"/>
</dbReference>
<dbReference type="PANTHER" id="PTHR30508">
    <property type="entry name" value="FES CLUSTER ASSEMBLY PROTEIN SUF"/>
    <property type="match status" value="1"/>
</dbReference>
<dbReference type="PANTHER" id="PTHR30508:SF1">
    <property type="entry name" value="UPF0051 PROTEIN ABCI8, CHLOROPLASTIC-RELATED"/>
    <property type="match status" value="1"/>
</dbReference>
<dbReference type="Pfam" id="PF01458">
    <property type="entry name" value="SUFBD_core"/>
    <property type="match status" value="1"/>
</dbReference>
<dbReference type="Pfam" id="PF19295">
    <property type="entry name" value="SufBD_N"/>
    <property type="match status" value="1"/>
</dbReference>
<dbReference type="SUPFAM" id="SSF101960">
    <property type="entry name" value="Stabilizer of iron transporter SufD"/>
    <property type="match status" value="1"/>
</dbReference>
<accession>Q5HHG8</accession>
<organism>
    <name type="scientific">Staphylococcus aureus (strain COL)</name>
    <dbReference type="NCBI Taxonomy" id="93062"/>
    <lineage>
        <taxon>Bacteria</taxon>
        <taxon>Bacillati</taxon>
        <taxon>Bacillota</taxon>
        <taxon>Bacilli</taxon>
        <taxon>Bacillales</taxon>
        <taxon>Staphylococcaceae</taxon>
        <taxon>Staphylococcus</taxon>
    </lineage>
</organism>
<protein>
    <recommendedName>
        <fullName>Iron-sulfur cluster assembly SufBD family protein SACOL0918</fullName>
    </recommendedName>
</protein>
<gene>
    <name type="ordered locus">SACOL0918</name>
</gene>
<evidence type="ECO:0000305" key="1"/>
<name>Y918_STAAC</name>
<sequence length="465" mass="52531">MAKKAPDVGDYKYGFHDDDVSIFRSERGLTENIVREISNMKNEPEWMLDFRLKSLKLFYKMPMPQWGGDLSELNFDDITYYVKPSEQAERSWDEVPEEIKRTFDKLGIPEAEQKYLAGVSAQYESEVVYHNMEKELEEKGIIFKDTDSALQENEELFKKYFASVVPAADNKFAALNSAVWSGGSFIYVPKNIKLDTPLQAYFRINSENMGQFERTLIIADEGASVHYVEGCTAPVYTTSSLHSAVVEIIVHKDAHVRYTTIQNWANNVYNLVTKRTFVYENGNMEWVDGNLGSKLTMKYPNCVLLGEGAKGSTLSIAFAGKGQVQDAGAKMIHKAPNTSSTIVSKSISKNGGKVIYRGIVHFGRKAKGARSNIECDTLILDNESTSDTIPYNEVFNDQISLEHEAKVSKVSEEQLFYLMSRGISEEEATEMIVMGFIEPFTKELPMEYAVEMNRLIKFEMEGSIG</sequence>
<reference key="1">
    <citation type="journal article" date="2005" name="J. Bacteriol.">
        <title>Insights on evolution of virulence and resistance from the complete genome analysis of an early methicillin-resistant Staphylococcus aureus strain and a biofilm-producing methicillin-resistant Staphylococcus epidermidis strain.</title>
        <authorList>
            <person name="Gill S.R."/>
            <person name="Fouts D.E."/>
            <person name="Archer G.L."/>
            <person name="Mongodin E.F."/>
            <person name="DeBoy R.T."/>
            <person name="Ravel J."/>
            <person name="Paulsen I.T."/>
            <person name="Kolonay J.F."/>
            <person name="Brinkac L.M."/>
            <person name="Beanan M.J."/>
            <person name="Dodson R.J."/>
            <person name="Daugherty S.C."/>
            <person name="Madupu R."/>
            <person name="Angiuoli S.V."/>
            <person name="Durkin A.S."/>
            <person name="Haft D.H."/>
            <person name="Vamathevan J.J."/>
            <person name="Khouri H."/>
            <person name="Utterback T.R."/>
            <person name="Lee C."/>
            <person name="Dimitrov G."/>
            <person name="Jiang L."/>
            <person name="Qin H."/>
            <person name="Weidman J."/>
            <person name="Tran K."/>
            <person name="Kang K.H."/>
            <person name="Hance I.R."/>
            <person name="Nelson K.E."/>
            <person name="Fraser C.M."/>
        </authorList>
    </citation>
    <scope>NUCLEOTIDE SEQUENCE [LARGE SCALE GENOMIC DNA]</scope>
    <source>
        <strain>COL</strain>
    </source>
</reference>